<gene>
    <name type="primary">tvp38</name>
    <name type="ORF">ATEG_03183</name>
</gene>
<dbReference type="EMBL" id="CH476597">
    <property type="protein sequence ID" value="EAU36457.1"/>
    <property type="molecule type" value="Genomic_DNA"/>
</dbReference>
<dbReference type="RefSeq" id="XP_001212361.1">
    <property type="nucleotide sequence ID" value="XM_001212361.1"/>
</dbReference>
<dbReference type="STRING" id="341663.Q0CT01"/>
<dbReference type="GlyCosmos" id="Q0CT01">
    <property type="glycosylation" value="1 site, No reported glycans"/>
</dbReference>
<dbReference type="EnsemblFungi" id="EAU36457">
    <property type="protein sequence ID" value="EAU36457"/>
    <property type="gene ID" value="ATEG_03183"/>
</dbReference>
<dbReference type="GeneID" id="4317830"/>
<dbReference type="VEuPathDB" id="FungiDB:ATEG_03183"/>
<dbReference type="eggNOG" id="KOG3140">
    <property type="taxonomic scope" value="Eukaryota"/>
</dbReference>
<dbReference type="HOGENOM" id="CLU_041954_0_0_1"/>
<dbReference type="OMA" id="YHDEFTD"/>
<dbReference type="OrthoDB" id="166803at2759"/>
<dbReference type="Proteomes" id="UP000007963">
    <property type="component" value="Unassembled WGS sequence"/>
</dbReference>
<dbReference type="GO" id="GO:0000139">
    <property type="term" value="C:Golgi membrane"/>
    <property type="evidence" value="ECO:0007669"/>
    <property type="project" value="UniProtKB-SubCell"/>
</dbReference>
<dbReference type="GO" id="GO:0000022">
    <property type="term" value="P:mitotic spindle elongation"/>
    <property type="evidence" value="ECO:0007669"/>
    <property type="project" value="TreeGrafter"/>
</dbReference>
<dbReference type="GO" id="GO:0016192">
    <property type="term" value="P:vesicle-mediated transport"/>
    <property type="evidence" value="ECO:0007669"/>
    <property type="project" value="TreeGrafter"/>
</dbReference>
<dbReference type="InterPro" id="IPR051076">
    <property type="entry name" value="Golgi_membrane_TVP38/TMEM64"/>
</dbReference>
<dbReference type="InterPro" id="IPR032816">
    <property type="entry name" value="VTT_dom"/>
</dbReference>
<dbReference type="PANTHER" id="PTHR47549:SF1">
    <property type="entry name" value="GOLGI APPARATUS MEMBRANE PROTEIN TVP38"/>
    <property type="match status" value="1"/>
</dbReference>
<dbReference type="PANTHER" id="PTHR47549">
    <property type="entry name" value="GOLGI APPARATUS MEMBRANE PROTEIN TVP38-RELATED"/>
    <property type="match status" value="1"/>
</dbReference>
<dbReference type="Pfam" id="PF09335">
    <property type="entry name" value="VTT_dom"/>
    <property type="match status" value="1"/>
</dbReference>
<reference key="1">
    <citation type="submission" date="2005-09" db="EMBL/GenBank/DDBJ databases">
        <title>Annotation of the Aspergillus terreus NIH2624 genome.</title>
        <authorList>
            <person name="Birren B.W."/>
            <person name="Lander E.S."/>
            <person name="Galagan J.E."/>
            <person name="Nusbaum C."/>
            <person name="Devon K."/>
            <person name="Henn M."/>
            <person name="Ma L.-J."/>
            <person name="Jaffe D.B."/>
            <person name="Butler J."/>
            <person name="Alvarez P."/>
            <person name="Gnerre S."/>
            <person name="Grabherr M."/>
            <person name="Kleber M."/>
            <person name="Mauceli E.W."/>
            <person name="Brockman W."/>
            <person name="Rounsley S."/>
            <person name="Young S.K."/>
            <person name="LaButti K."/>
            <person name="Pushparaj V."/>
            <person name="DeCaprio D."/>
            <person name="Crawford M."/>
            <person name="Koehrsen M."/>
            <person name="Engels R."/>
            <person name="Montgomery P."/>
            <person name="Pearson M."/>
            <person name="Howarth C."/>
            <person name="Larson L."/>
            <person name="Luoma S."/>
            <person name="White J."/>
            <person name="Alvarado L."/>
            <person name="Kodira C.D."/>
            <person name="Zeng Q."/>
            <person name="Oleary S."/>
            <person name="Yandava C."/>
            <person name="Denning D.W."/>
            <person name="Nierman W.C."/>
            <person name="Milne T."/>
            <person name="Madden K."/>
        </authorList>
    </citation>
    <scope>NUCLEOTIDE SEQUENCE [LARGE SCALE GENOMIC DNA]</scope>
    <source>
        <strain>NIH 2624 / FGSC A1156</strain>
    </source>
</reference>
<feature type="chain" id="PRO_0000343064" description="Golgi apparatus membrane protein tvp38">
    <location>
        <begin position="1"/>
        <end position="418"/>
    </location>
</feature>
<feature type="topological domain" description="Lumenal" evidence="2">
    <location>
        <begin position="1"/>
        <end position="82"/>
    </location>
</feature>
<feature type="transmembrane region" description="Helical" evidence="2">
    <location>
        <begin position="83"/>
        <end position="103"/>
    </location>
</feature>
<feature type="topological domain" description="Cytoplasmic" evidence="2">
    <location>
        <begin position="104"/>
        <end position="121"/>
    </location>
</feature>
<feature type="transmembrane region" description="Helical" evidence="2">
    <location>
        <begin position="122"/>
        <end position="142"/>
    </location>
</feature>
<feature type="topological domain" description="Lumenal" evidence="2">
    <location>
        <begin position="143"/>
        <end position="158"/>
    </location>
</feature>
<feature type="transmembrane region" description="Helical" evidence="2">
    <location>
        <begin position="159"/>
        <end position="181"/>
    </location>
</feature>
<feature type="topological domain" description="Cytoplasmic" evidence="2">
    <location>
        <begin position="182"/>
        <end position="235"/>
    </location>
</feature>
<feature type="transmembrane region" description="Helical" evidence="2">
    <location>
        <begin position="236"/>
        <end position="256"/>
    </location>
</feature>
<feature type="topological domain" description="Lumenal" evidence="2">
    <location>
        <begin position="257"/>
        <end position="274"/>
    </location>
</feature>
<feature type="transmembrane region" description="Helical" evidence="2">
    <location>
        <begin position="275"/>
        <end position="295"/>
    </location>
</feature>
<feature type="topological domain" description="Cytoplasmic" evidence="2">
    <location>
        <begin position="296"/>
        <end position="418"/>
    </location>
</feature>
<feature type="region of interest" description="Disordered" evidence="3">
    <location>
        <begin position="1"/>
        <end position="51"/>
    </location>
</feature>
<feature type="region of interest" description="VTT domain" evidence="1">
    <location>
        <begin position="150"/>
        <end position="259"/>
    </location>
</feature>
<feature type="region of interest" description="Disordered" evidence="3">
    <location>
        <begin position="368"/>
        <end position="418"/>
    </location>
</feature>
<feature type="compositionally biased region" description="Low complexity" evidence="3">
    <location>
        <begin position="1"/>
        <end position="25"/>
    </location>
</feature>
<feature type="compositionally biased region" description="Basic and acidic residues" evidence="3">
    <location>
        <begin position="40"/>
        <end position="51"/>
    </location>
</feature>
<feature type="compositionally biased region" description="Basic and acidic residues" evidence="3">
    <location>
        <begin position="369"/>
        <end position="399"/>
    </location>
</feature>
<feature type="glycosylation site" description="N-linked (GlcNAc...) asparagine" evidence="2">
    <location>
        <position position="65"/>
    </location>
</feature>
<proteinExistence type="inferred from homology"/>
<comment type="function">
    <text>Golgi membrane protein involved in vesicular trafficking and spindle migration.</text>
</comment>
<comment type="subcellular location">
    <subcellularLocation>
        <location>Golgi apparatus membrane</location>
        <topology>Multi-pass membrane protein</topology>
    </subcellularLocation>
</comment>
<comment type="domain">
    <text evidence="1">The VTT domain was previously called the SNARE-assoc domain. As there is no evidence that this domain associates with SNARE proteins, it was renamed as VMP1, TMEM41, and TVP38 (VTT) domain.</text>
</comment>
<comment type="similarity">
    <text evidence="4">Belongs to the TVP38/TMEM64 family.</text>
</comment>
<organism>
    <name type="scientific">Aspergillus terreus (strain NIH 2624 / FGSC A1156)</name>
    <dbReference type="NCBI Taxonomy" id="341663"/>
    <lineage>
        <taxon>Eukaryota</taxon>
        <taxon>Fungi</taxon>
        <taxon>Dikarya</taxon>
        <taxon>Ascomycota</taxon>
        <taxon>Pezizomycotina</taxon>
        <taxon>Eurotiomycetes</taxon>
        <taxon>Eurotiomycetidae</taxon>
        <taxon>Eurotiales</taxon>
        <taxon>Aspergillaceae</taxon>
        <taxon>Aspergillus</taxon>
        <taxon>Aspergillus subgen. Circumdati</taxon>
    </lineage>
</organism>
<sequence length="418" mass="46821">MPADYTSTARALSLSTSPPLSSPTSEDGSYLPWRHLAPTGRRDSSSRSIRESNSLRHQVMNRINNASQRIIMTWRRMNFWQRIGAVLAAILANLLGIGFLVFTGKVFIWLKPVAEQWEHNPLVFFVLWLCVFFVSFPPLVGWSTFGTVAGYIFGVWKGWLLYASATVLGSTASFIVSRTILSKFVHRLMERDKRFAALALTLKYDGLKLLCMIRLCPLPYSVCNGAVSTFPTVHPLTYGLATAIITPKLLVPAFIGNRLRVLSEKGGEMSAGSKAVNICSIIITIAIGIFTGWYIYRRTLARAKELEAQEREGIRQSLEADHAAHRPHHAFFEDPEANIAATTLACDEEERIGFHDFDDDNVDLVLDDESGREISPKRTDGPYRDEFTDNDSDVFKDGDGTDGETYTLHTHVRQNPRS</sequence>
<protein>
    <recommendedName>
        <fullName>Golgi apparatus membrane protein tvp38</fullName>
    </recommendedName>
</protein>
<accession>Q0CT01</accession>
<keyword id="KW-0325">Glycoprotein</keyword>
<keyword id="KW-0333">Golgi apparatus</keyword>
<keyword id="KW-0472">Membrane</keyword>
<keyword id="KW-1185">Reference proteome</keyword>
<keyword id="KW-0812">Transmembrane</keyword>
<keyword id="KW-1133">Transmembrane helix</keyword>
<evidence type="ECO:0000250" key="1">
    <source>
        <dbReference type="UniProtKB" id="P36164"/>
    </source>
</evidence>
<evidence type="ECO:0000255" key="2"/>
<evidence type="ECO:0000256" key="3">
    <source>
        <dbReference type="SAM" id="MobiDB-lite"/>
    </source>
</evidence>
<evidence type="ECO:0000305" key="4"/>
<name>TVP38_ASPTN</name>